<protein>
    <recommendedName>
        <fullName evidence="1">Non-specific ribonucleoside hydrolase RihC</fullName>
        <ecNumber evidence="1">3.2.-.-</ecNumber>
    </recommendedName>
    <alternativeName>
        <fullName evidence="1">Purine/pyrimidine ribonucleoside hydrolase</fullName>
    </alternativeName>
</protein>
<reference key="1">
    <citation type="submission" date="2007-11" db="EMBL/GenBank/DDBJ databases">
        <authorList>
            <consortium name="The Salmonella enterica serovar Paratyphi B Genome Sequencing Project"/>
            <person name="McClelland M."/>
            <person name="Sanderson E.K."/>
            <person name="Porwollik S."/>
            <person name="Spieth J."/>
            <person name="Clifton W.S."/>
            <person name="Fulton R."/>
            <person name="Cordes M."/>
            <person name="Wollam A."/>
            <person name="Shah N."/>
            <person name="Pepin K."/>
            <person name="Bhonagiri V."/>
            <person name="Nash W."/>
            <person name="Johnson M."/>
            <person name="Thiruvilangam P."/>
            <person name="Wilson R."/>
        </authorList>
    </citation>
    <scope>NUCLEOTIDE SEQUENCE [LARGE SCALE GENOMIC DNA]</scope>
    <source>
        <strain>ATCC BAA-1250 / SPB7</strain>
    </source>
</reference>
<gene>
    <name evidence="1" type="primary">rihC</name>
    <name type="ordered locus">SPAB_00062</name>
</gene>
<organism>
    <name type="scientific">Salmonella paratyphi B (strain ATCC BAA-1250 / SPB7)</name>
    <dbReference type="NCBI Taxonomy" id="1016998"/>
    <lineage>
        <taxon>Bacteria</taxon>
        <taxon>Pseudomonadati</taxon>
        <taxon>Pseudomonadota</taxon>
        <taxon>Gammaproteobacteria</taxon>
        <taxon>Enterobacterales</taxon>
        <taxon>Enterobacteriaceae</taxon>
        <taxon>Salmonella</taxon>
    </lineage>
</organism>
<feature type="chain" id="PRO_1000087437" description="Non-specific ribonucleoside hydrolase RihC">
    <location>
        <begin position="1"/>
        <end position="306"/>
    </location>
</feature>
<feature type="active site" evidence="1">
    <location>
        <position position="235"/>
    </location>
</feature>
<keyword id="KW-0326">Glycosidase</keyword>
<keyword id="KW-0378">Hydrolase</keyword>
<dbReference type="EC" id="3.2.-.-" evidence="1"/>
<dbReference type="EMBL" id="CP000886">
    <property type="protein sequence ID" value="ABX65505.1"/>
    <property type="molecule type" value="Genomic_DNA"/>
</dbReference>
<dbReference type="RefSeq" id="WP_000127278.1">
    <property type="nucleotide sequence ID" value="NC_010102.1"/>
</dbReference>
<dbReference type="SMR" id="A9MYH1"/>
<dbReference type="KEGG" id="spq:SPAB_00062"/>
<dbReference type="PATRIC" id="fig|1016998.12.peg.61"/>
<dbReference type="HOGENOM" id="CLU_036838_2_2_6"/>
<dbReference type="BioCyc" id="SENT1016998:SPAB_RS00255-MONOMER"/>
<dbReference type="Proteomes" id="UP000008556">
    <property type="component" value="Chromosome"/>
</dbReference>
<dbReference type="GO" id="GO:0005829">
    <property type="term" value="C:cytosol"/>
    <property type="evidence" value="ECO:0007669"/>
    <property type="project" value="TreeGrafter"/>
</dbReference>
<dbReference type="GO" id="GO:0008477">
    <property type="term" value="F:purine nucleosidase activity"/>
    <property type="evidence" value="ECO:0007669"/>
    <property type="project" value="TreeGrafter"/>
</dbReference>
<dbReference type="GO" id="GO:0006144">
    <property type="term" value="P:purine nucleobase metabolic process"/>
    <property type="evidence" value="ECO:0007669"/>
    <property type="project" value="UniProtKB-UniRule"/>
</dbReference>
<dbReference type="GO" id="GO:0006152">
    <property type="term" value="P:purine nucleoside catabolic process"/>
    <property type="evidence" value="ECO:0007669"/>
    <property type="project" value="TreeGrafter"/>
</dbReference>
<dbReference type="GO" id="GO:0006206">
    <property type="term" value="P:pyrimidine nucleobase metabolic process"/>
    <property type="evidence" value="ECO:0007669"/>
    <property type="project" value="UniProtKB-UniRule"/>
</dbReference>
<dbReference type="CDD" id="cd02651">
    <property type="entry name" value="nuc_hydro_IU_UC_XIUA"/>
    <property type="match status" value="1"/>
</dbReference>
<dbReference type="FunFam" id="3.90.245.10:FF:000002">
    <property type="entry name" value="Non-specific ribonucleoside hydrolase RihC"/>
    <property type="match status" value="1"/>
</dbReference>
<dbReference type="Gene3D" id="3.90.245.10">
    <property type="entry name" value="Ribonucleoside hydrolase-like"/>
    <property type="match status" value="1"/>
</dbReference>
<dbReference type="HAMAP" id="MF_01432">
    <property type="entry name" value="Nucleosid_hydro_RihC"/>
    <property type="match status" value="1"/>
</dbReference>
<dbReference type="InterPro" id="IPR001910">
    <property type="entry name" value="Inosine/uridine_hydrolase_dom"/>
</dbReference>
<dbReference type="InterPro" id="IPR023186">
    <property type="entry name" value="IUNH"/>
</dbReference>
<dbReference type="InterPro" id="IPR022976">
    <property type="entry name" value="Nucleosid_hydro_RihC_nonspecif"/>
</dbReference>
<dbReference type="InterPro" id="IPR036452">
    <property type="entry name" value="Ribo_hydro-like"/>
</dbReference>
<dbReference type="NCBIfam" id="NF008036">
    <property type="entry name" value="PRK10768.1"/>
    <property type="match status" value="1"/>
</dbReference>
<dbReference type="PANTHER" id="PTHR12304">
    <property type="entry name" value="INOSINE-URIDINE PREFERRING NUCLEOSIDE HYDROLASE"/>
    <property type="match status" value="1"/>
</dbReference>
<dbReference type="PANTHER" id="PTHR12304:SF15">
    <property type="entry name" value="NON-SPECIFIC RIBONUCLEOSIDE HYDROLASE RIHC"/>
    <property type="match status" value="1"/>
</dbReference>
<dbReference type="Pfam" id="PF01156">
    <property type="entry name" value="IU_nuc_hydro"/>
    <property type="match status" value="1"/>
</dbReference>
<dbReference type="SUPFAM" id="SSF53590">
    <property type="entry name" value="Nucleoside hydrolase"/>
    <property type="match status" value="1"/>
</dbReference>
<accession>A9MYH1</accession>
<comment type="function">
    <text evidence="1">Hydrolyzes both purine and pyrimidine ribonucleosides with a broad-substrate specificity.</text>
</comment>
<comment type="similarity">
    <text evidence="1">Belongs to the IUNH family. RihC subfamily.</text>
</comment>
<proteinExistence type="inferred from homology"/>
<sequence>MTASLHIILDTDPGIDDAAAIAAALFAPQLDLQLITTVAGNVSVEKTTRNALQLLHFWNSDIPLAQGAATPLLRPLRDAAYVHGESGMEGYDFVDHQRQPLAKPAFIAIRDVLMNAPEPMTLVAIGPLTNIALLLMHYPECACNIHRLVLMGGSAGRGNFTPNAEFNIAVDPEAAALVFRSGLEIVMCGLDVTNQAMLSPDFLNKLPALNRTGKMLHSLFNHYRSGSMRTGVRMHDLCAIAWLVRPELFTLQSCFVAVETQGQYTAGTTVVDIEGRLGQPANAQVALALDVDGFRQWVAEVFAYAP</sequence>
<evidence type="ECO:0000255" key="1">
    <source>
        <dbReference type="HAMAP-Rule" id="MF_01432"/>
    </source>
</evidence>
<name>RIHC_SALPB</name>